<comment type="subcellular location">
    <subcellularLocation>
        <location evidence="2">Cell membrane</location>
        <topology evidence="2">Multi-pass membrane protein</topology>
    </subcellularLocation>
</comment>
<comment type="similarity">
    <text evidence="2">To M.jannaschii FlaJ.</text>
</comment>
<gene>
    <name type="ordered locus">MJ1286</name>
</gene>
<protein>
    <recommendedName>
        <fullName>Uncharacterized protein MJ1286</fullName>
    </recommendedName>
</protein>
<evidence type="ECO:0000255" key="1"/>
<evidence type="ECO:0000305" key="2"/>
<proteinExistence type="predicted"/>
<sequence>MKNLLKRYVSIKNIIKVIELDFFANLKLRYYKLAMKLFKIEDEKFDEILLKAGMNAVSSTYLPVVFLTSIILGLIIFIIFLIVFNIFYAIFGLIGGIFIVILIGVLYPYVLAEEKAKSIDENLPYAFAFISALSSANIPVVEIFTSLSKEDIYGGMSKEAKEIVKDTKVFNYDIITTFLRRARITPSKKLSSVYYNIVASLIVGAEMKNIFHEIYERLMEDRKLELFEAIEKVEILSEFYVIACGMIPLFVVMTVPVASSISAILQTASLFGDPKLLPLTFYLWVPIASIIFMGLVYGILPKDFKLNVSLLDVLKEFDEPEIEGIKMKFKWKPVHFITLFFWMLSIISFMLFFIRKSIFKFHGTDFLMFGILFLILPFILTSYWHFIIENQKERYYPIFLNDLTMAVRSGMDIIRAMQVCARTNYGPLTKIVKKMAIQMSWGRPVNEVFADLERTEKSLIAKRIASILKECAVSGGDVKDILTSVTVHAYKLSEMKREISARQFIYVVVIYLSFFLYIGTSYIMVHSLLPTLLKNIHGLSVEFYKNYLFQGILIYSIFSGASLGILTERSIIAGIKHILLMLIVGYMLFKFYIGG</sequence>
<accession>Q58682</accession>
<dbReference type="EMBL" id="L77117">
    <property type="protein sequence ID" value="AAB99288.1"/>
    <property type="molecule type" value="Genomic_DNA"/>
</dbReference>
<dbReference type="PIR" id="E64460">
    <property type="entry name" value="E64460"/>
</dbReference>
<dbReference type="SMR" id="Q58682"/>
<dbReference type="STRING" id="243232.MJ_1286"/>
<dbReference type="PaxDb" id="243232-MJ_1286"/>
<dbReference type="EnsemblBacteria" id="AAB99288">
    <property type="protein sequence ID" value="AAB99288"/>
    <property type="gene ID" value="MJ_1286"/>
</dbReference>
<dbReference type="KEGG" id="mja:MJ_1286"/>
<dbReference type="eggNOG" id="arCOG01808">
    <property type="taxonomic scope" value="Archaea"/>
</dbReference>
<dbReference type="HOGENOM" id="CLU_484538_0_0_2"/>
<dbReference type="InParanoid" id="Q58682"/>
<dbReference type="PhylomeDB" id="Q58682"/>
<dbReference type="Proteomes" id="UP000000805">
    <property type="component" value="Chromosome"/>
</dbReference>
<dbReference type="GO" id="GO:0005886">
    <property type="term" value="C:plasma membrane"/>
    <property type="evidence" value="ECO:0007669"/>
    <property type="project" value="UniProtKB-SubCell"/>
</dbReference>
<dbReference type="Gene3D" id="1.20.81.30">
    <property type="entry name" value="Type II secretion system (T2SS), domain F"/>
    <property type="match status" value="1"/>
</dbReference>
<dbReference type="InterPro" id="IPR056569">
    <property type="entry name" value="ArlJ-like"/>
</dbReference>
<dbReference type="InterPro" id="IPR018076">
    <property type="entry name" value="T2SS_GspF_dom"/>
</dbReference>
<dbReference type="InterPro" id="IPR042094">
    <property type="entry name" value="T2SS_GspF_sf"/>
</dbReference>
<dbReference type="PANTHER" id="PTHR35402">
    <property type="entry name" value="INTEGRAL MEMBRANE PROTEIN-RELATED"/>
    <property type="match status" value="1"/>
</dbReference>
<dbReference type="PANTHER" id="PTHR35402:SF1">
    <property type="entry name" value="TYPE II SECRETION SYSTEM PROTEIN GSPF DOMAIN-CONTAINING PROTEIN"/>
    <property type="match status" value="1"/>
</dbReference>
<dbReference type="Pfam" id="PF00482">
    <property type="entry name" value="T2SSF"/>
    <property type="match status" value="2"/>
</dbReference>
<keyword id="KW-1003">Cell membrane</keyword>
<keyword id="KW-0472">Membrane</keyword>
<keyword id="KW-1185">Reference proteome</keyword>
<keyword id="KW-0812">Transmembrane</keyword>
<keyword id="KW-1133">Transmembrane helix</keyword>
<organism>
    <name type="scientific">Methanocaldococcus jannaschii (strain ATCC 43067 / DSM 2661 / JAL-1 / JCM 10045 / NBRC 100440)</name>
    <name type="common">Methanococcus jannaschii</name>
    <dbReference type="NCBI Taxonomy" id="243232"/>
    <lineage>
        <taxon>Archaea</taxon>
        <taxon>Methanobacteriati</taxon>
        <taxon>Methanobacteriota</taxon>
        <taxon>Methanomada group</taxon>
        <taxon>Methanococci</taxon>
        <taxon>Methanococcales</taxon>
        <taxon>Methanocaldococcaceae</taxon>
        <taxon>Methanocaldococcus</taxon>
    </lineage>
</organism>
<name>Y1286_METJA</name>
<feature type="chain" id="PRO_0000107254" description="Uncharacterized protein MJ1286">
    <location>
        <begin position="1"/>
        <end position="595"/>
    </location>
</feature>
<feature type="transmembrane region" description="Helical" evidence="1">
    <location>
        <begin position="64"/>
        <end position="84"/>
    </location>
</feature>
<feature type="transmembrane region" description="Helical" evidence="1">
    <location>
        <begin position="86"/>
        <end position="106"/>
    </location>
</feature>
<feature type="transmembrane region" description="Helical" evidence="1">
    <location>
        <begin position="239"/>
        <end position="259"/>
    </location>
</feature>
<feature type="transmembrane region" description="Helical" evidence="1">
    <location>
        <begin position="281"/>
        <end position="301"/>
    </location>
</feature>
<feature type="transmembrane region" description="Helical" evidence="1">
    <location>
        <begin position="334"/>
        <end position="354"/>
    </location>
</feature>
<feature type="transmembrane region" description="Helical" evidence="1">
    <location>
        <begin position="368"/>
        <end position="388"/>
    </location>
</feature>
<feature type="transmembrane region" description="Helical" evidence="1">
    <location>
        <begin position="504"/>
        <end position="524"/>
    </location>
</feature>
<feature type="transmembrane region" description="Helical" evidence="1">
    <location>
        <begin position="547"/>
        <end position="567"/>
    </location>
</feature>
<feature type="transmembrane region" description="Helical" evidence="1">
    <location>
        <begin position="571"/>
        <end position="591"/>
    </location>
</feature>
<reference key="1">
    <citation type="journal article" date="1996" name="Science">
        <title>Complete genome sequence of the methanogenic archaeon, Methanococcus jannaschii.</title>
        <authorList>
            <person name="Bult C.J."/>
            <person name="White O."/>
            <person name="Olsen G.J."/>
            <person name="Zhou L."/>
            <person name="Fleischmann R.D."/>
            <person name="Sutton G.G."/>
            <person name="Blake J.A."/>
            <person name="FitzGerald L.M."/>
            <person name="Clayton R.A."/>
            <person name="Gocayne J.D."/>
            <person name="Kerlavage A.R."/>
            <person name="Dougherty B.A."/>
            <person name="Tomb J.-F."/>
            <person name="Adams M.D."/>
            <person name="Reich C.I."/>
            <person name="Overbeek R."/>
            <person name="Kirkness E.F."/>
            <person name="Weinstock K.G."/>
            <person name="Merrick J.M."/>
            <person name="Glodek A."/>
            <person name="Scott J.L."/>
            <person name="Geoghagen N.S.M."/>
            <person name="Weidman J.F."/>
            <person name="Fuhrmann J.L."/>
            <person name="Nguyen D."/>
            <person name="Utterback T.R."/>
            <person name="Kelley J.M."/>
            <person name="Peterson J.D."/>
            <person name="Sadow P.W."/>
            <person name="Hanna M.C."/>
            <person name="Cotton M.D."/>
            <person name="Roberts K.M."/>
            <person name="Hurst M.A."/>
            <person name="Kaine B.P."/>
            <person name="Borodovsky M."/>
            <person name="Klenk H.-P."/>
            <person name="Fraser C.M."/>
            <person name="Smith H.O."/>
            <person name="Woese C.R."/>
            <person name="Venter J.C."/>
        </authorList>
    </citation>
    <scope>NUCLEOTIDE SEQUENCE [LARGE SCALE GENOMIC DNA]</scope>
    <source>
        <strain>ATCC 43067 / DSM 2661 / JAL-1 / JCM 10045 / NBRC 100440</strain>
    </source>
</reference>